<dbReference type="EMBL" id="AF282852">
    <property type="protein sequence ID" value="AAF80203.1"/>
    <property type="molecule type" value="Genomic_DNA"/>
</dbReference>
<dbReference type="EMBL" id="AC000108">
    <property type="status" value="NOT_ANNOTATED_CDS"/>
    <property type="molecule type" value="Genomic_DNA"/>
</dbReference>
<dbReference type="EMBL" id="AE000511">
    <property type="protein sequence ID" value="AAD07599.1"/>
    <property type="molecule type" value="Genomic_DNA"/>
</dbReference>
<dbReference type="PIR" id="D64586">
    <property type="entry name" value="D64586"/>
</dbReference>
<dbReference type="RefSeq" id="NP_207328.1">
    <property type="nucleotide sequence ID" value="NC_000915.1"/>
</dbReference>
<dbReference type="PDB" id="6OEE">
    <property type="method" value="EM"/>
    <property type="resolution" value="3.80 A"/>
    <property type="chains" value="A/B/C/D/E/F/G/H/I/J/K/L/M/N=1-280"/>
</dbReference>
<dbReference type="PDBsum" id="6OEE"/>
<dbReference type="EMDB" id="EMD-42290"/>
<dbReference type="SMR" id="P97245"/>
<dbReference type="DIP" id="DIP-3589N"/>
<dbReference type="IntAct" id="P97245">
    <property type="interactions" value="2"/>
</dbReference>
<dbReference type="MINT" id="P97245"/>
<dbReference type="STRING" id="85962.HP_0532"/>
<dbReference type="TCDB" id="3.A.7.12.1">
    <property type="family name" value="the type iv (conjugal dna-protein transfer or virb) secretory pathway (ivsp) family"/>
</dbReference>
<dbReference type="PaxDb" id="85962-C694_02745"/>
<dbReference type="EnsemblBacteria" id="AAD07599">
    <property type="protein sequence ID" value="AAD07599"/>
    <property type="gene ID" value="HP_0532"/>
</dbReference>
<dbReference type="KEGG" id="hpy:HP_0532"/>
<dbReference type="PATRIC" id="fig|85962.8.peg.558"/>
<dbReference type="InParanoid" id="P97245"/>
<dbReference type="OrthoDB" id="5322333at2"/>
<dbReference type="Proteomes" id="UP000000429">
    <property type="component" value="Chromosome"/>
</dbReference>
<dbReference type="GO" id="GO:0019867">
    <property type="term" value="C:outer membrane"/>
    <property type="evidence" value="ECO:0000314"/>
    <property type="project" value="CACAO"/>
</dbReference>
<dbReference type="GO" id="GO:0005886">
    <property type="term" value="C:plasma membrane"/>
    <property type="evidence" value="ECO:0007669"/>
    <property type="project" value="UniProtKB-SubCell"/>
</dbReference>
<dbReference type="GO" id="GO:0009306">
    <property type="term" value="P:protein secretion"/>
    <property type="evidence" value="ECO:0000315"/>
    <property type="project" value="CACAO"/>
</dbReference>
<dbReference type="InterPro" id="IPR025264">
    <property type="entry name" value="Cag12"/>
</dbReference>
<dbReference type="Pfam" id="PF13117">
    <property type="entry name" value="Cag12"/>
    <property type="match status" value="1"/>
</dbReference>
<dbReference type="PROSITE" id="PS51257">
    <property type="entry name" value="PROKAR_LIPOPROTEIN"/>
    <property type="match status" value="1"/>
</dbReference>
<gene>
    <name type="primary">cagT</name>
    <name type="synonym">cag12</name>
    <name type="ordered locus">HP_0532</name>
</gene>
<name>CAGT_HELPY</name>
<accession>P97245</accession>
<protein>
    <recommendedName>
        <fullName>CAG pathogenicity island protein 12</fullName>
    </recommendedName>
</protein>
<feature type="signal peptide" evidence="1">
    <location>
        <begin position="1"/>
        <end position="20"/>
    </location>
</feature>
<feature type="chain" id="PRO_0000020841" description="CAG pathogenicity island protein 12">
    <location>
        <begin position="21"/>
        <end position="280"/>
    </location>
</feature>
<feature type="lipid moiety-binding region" description="N-palmitoyl cysteine" evidence="1">
    <location>
        <position position="21"/>
    </location>
</feature>
<feature type="lipid moiety-binding region" description="S-diacylglycerol cysteine" evidence="1">
    <location>
        <position position="21"/>
    </location>
</feature>
<feature type="sequence variant" description="In strain: NCTC 11638.">
    <original>L</original>
    <variation>V</variation>
    <location>
        <position position="3"/>
    </location>
</feature>
<feature type="sequence variant" description="In strain: NCTC 11638.">
    <original>I</original>
    <variation>T</variation>
    <location>
        <position position="9"/>
    </location>
</feature>
<feature type="sequence variant" description="In strain: NCTC 11638.">
    <original>S</original>
    <variation>N</variation>
    <location>
        <position position="144"/>
    </location>
</feature>
<sequence>MKLRASVLIGATILCLILSACSNYAKKVVKQKNHVYTPVYNELIEKYSEIPLNDKLKDTPFMVQVKLPNYKDYLLDNKQVVLTFKLVHHSKKITLIGDANKILQYKNYFQANGARSDIDFYLQPTLNQKGVVMIASNYNDNPNSKEKPQTFDVLQGSQPMLGANTKNLHGYDVSGANNKQVINEVAREKAQLEKINQYYKTLLQDKEQEYTTRKNNQREILETLSNRAGYQMRQNVISSEIFKNGNLNMQAKEEEVREKLQEERENEYLRNQIRSLLSGK</sequence>
<comment type="interaction">
    <interactant intactId="EBI-2585196">
        <id>P97245</id>
    </interactant>
    <interactant intactId="EBI-2506871">
        <id>O25258</id>
        <label>HP_0522</label>
    </interactant>
    <organismsDiffer>false</organismsDiffer>
    <experiments>3</experiments>
</comment>
<comment type="subcellular location">
    <subcellularLocation>
        <location evidence="2">Cell membrane</location>
        <topology evidence="2">Lipid-anchor</topology>
    </subcellularLocation>
</comment>
<reference key="1">
    <citation type="journal article" date="1996" name="Proc. Natl. Acad. Sci. U.S.A.">
        <title>cag, a pathogenicity island of Helicobacter pylori, encodes type I-specific and disease-associated virulence factors.</title>
        <authorList>
            <person name="Censini S."/>
            <person name="Lange C."/>
            <person name="Xiang Z."/>
            <person name="Crabtree J."/>
            <person name="Ghiara P."/>
            <person name="Borodovsky M."/>
            <person name="Rappuoli R."/>
            <person name="Covacci A."/>
        </authorList>
    </citation>
    <scope>NUCLEOTIDE SEQUENCE [GENOMIC DNA]</scope>
    <source>
        <strain>DSM 4867 / CCUG 17874 / NCTC 11638</strain>
    </source>
</reference>
<reference key="2">
    <citation type="journal article" date="1998" name="Mol. Microbiol.">
        <title>Analyses of the cag pathogenicity island of Helicobacter pylori.</title>
        <authorList>
            <person name="Akopyants N.S."/>
            <person name="Clifton S.W."/>
            <person name="Kersulyte D."/>
            <person name="Crabtree J.E."/>
            <person name="Youree B.E."/>
            <person name="Reece C.A."/>
            <person name="Bukanov N.O."/>
            <person name="Drazek E.S."/>
            <person name="Roe B.A."/>
            <person name="Berg D.E."/>
        </authorList>
    </citation>
    <scope>NUCLEOTIDE SEQUENCE [GENOMIC DNA]</scope>
</reference>
<reference key="3">
    <citation type="journal article" date="1997" name="Nature">
        <title>The complete genome sequence of the gastric pathogen Helicobacter pylori.</title>
        <authorList>
            <person name="Tomb J.-F."/>
            <person name="White O."/>
            <person name="Kerlavage A.R."/>
            <person name="Clayton R.A."/>
            <person name="Sutton G.G."/>
            <person name="Fleischmann R.D."/>
            <person name="Ketchum K.A."/>
            <person name="Klenk H.-P."/>
            <person name="Gill S.R."/>
            <person name="Dougherty B.A."/>
            <person name="Nelson K.E."/>
            <person name="Quackenbush J."/>
            <person name="Zhou L."/>
            <person name="Kirkness E.F."/>
            <person name="Peterson S.N."/>
            <person name="Loftus B.J."/>
            <person name="Richardson D.L."/>
            <person name="Dodson R.J."/>
            <person name="Khalak H.G."/>
            <person name="Glodek A."/>
            <person name="McKenney K."/>
            <person name="FitzGerald L.M."/>
            <person name="Lee N."/>
            <person name="Adams M.D."/>
            <person name="Hickey E.K."/>
            <person name="Berg D.E."/>
            <person name="Gocayne J.D."/>
            <person name="Utterback T.R."/>
            <person name="Peterson J.D."/>
            <person name="Kelley J.M."/>
            <person name="Cotton M.D."/>
            <person name="Weidman J.F."/>
            <person name="Fujii C."/>
            <person name="Bowman C."/>
            <person name="Watthey L."/>
            <person name="Wallin E."/>
            <person name="Hayes W.S."/>
            <person name="Borodovsky M."/>
            <person name="Karp P.D."/>
            <person name="Smith H.O."/>
            <person name="Fraser C.M."/>
            <person name="Venter J.C."/>
        </authorList>
    </citation>
    <scope>NUCLEOTIDE SEQUENCE [LARGE SCALE GENOMIC DNA]</scope>
    <source>
        <strain>ATCC 700392 / 26695</strain>
    </source>
</reference>
<proteinExistence type="evidence at protein level"/>
<organism>
    <name type="scientific">Helicobacter pylori (strain ATCC 700392 / 26695)</name>
    <name type="common">Campylobacter pylori</name>
    <dbReference type="NCBI Taxonomy" id="85962"/>
    <lineage>
        <taxon>Bacteria</taxon>
        <taxon>Pseudomonadati</taxon>
        <taxon>Campylobacterota</taxon>
        <taxon>Epsilonproteobacteria</taxon>
        <taxon>Campylobacterales</taxon>
        <taxon>Helicobacteraceae</taxon>
        <taxon>Helicobacter</taxon>
    </lineage>
</organism>
<keyword id="KW-0002">3D-structure</keyword>
<keyword id="KW-1003">Cell membrane</keyword>
<keyword id="KW-0449">Lipoprotein</keyword>
<keyword id="KW-0472">Membrane</keyword>
<keyword id="KW-0564">Palmitate</keyword>
<keyword id="KW-1185">Reference proteome</keyword>
<keyword id="KW-0732">Signal</keyword>
<evidence type="ECO:0000255" key="1">
    <source>
        <dbReference type="PROSITE-ProRule" id="PRU00303"/>
    </source>
</evidence>
<evidence type="ECO:0000305" key="2"/>